<sequence>MSVEASRTCFLIDSLLNKKPKEELETEEEDEEEDEEEELSSSEVTSENDMETESASSSASSVGQPKPDFSAFHKIFSNLDFAKLAAVKRNGHHQPMLFRPECFFPLELSKHLHLVQQTFQMNVLQNLGHTLPLPFVPMLKNVAPAQKRLNNKRASYVDHSQKGNLKKYRCDVCDKTFSRSNTLITHKRIHTGEKPFKCEHCGRAFRQPGNLTRHRLTHTTVKPYVCGLCDKAFNRASNLHTHMRTHTNV</sequence>
<feature type="chain" id="PRO_0000438328" description="Zinc finger protein mnm-2" evidence="4">
    <location>
        <begin position="1"/>
        <end position="249"/>
    </location>
</feature>
<feature type="zinc finger region" description="C2H2-type 1" evidence="1">
    <location>
        <begin position="168"/>
        <end position="190"/>
    </location>
</feature>
<feature type="zinc finger region" description="C2H2-type 2" evidence="1">
    <location>
        <begin position="196"/>
        <end position="218"/>
    </location>
</feature>
<feature type="zinc finger region" description="C2H2-type 3" evidence="1">
    <location>
        <begin position="224"/>
        <end position="246"/>
    </location>
</feature>
<feature type="region of interest" description="Disordered" evidence="2">
    <location>
        <begin position="20"/>
        <end position="65"/>
    </location>
</feature>
<feature type="compositionally biased region" description="Acidic residues" evidence="2">
    <location>
        <begin position="24"/>
        <end position="52"/>
    </location>
</feature>
<feature type="mutagenesis site" description="In mnm-2(et2); Defective formation of the distal end of the two M2 motor neurons with M2 growth cones forming at the correct position but stalling or erring ipsilaterally to produce abnormal trajectories and thick growth cone remnants. mnm-2 expression is gradually lost in both the M2 and M3 motor neurons in contrast to the wild-type where expression is maintained in the M3 neurons. Functional impairment of the M3 neuron with dramatically reduced pharyngeal pumping." evidence="3">
    <original>N</original>
    <variation>SINSDKLQVAMLYIISD</variation>
    <location>
        <position position="141"/>
    </location>
</feature>
<dbReference type="EMBL" id="BX284606">
    <property type="protein sequence ID" value="CCD62398.1"/>
    <property type="molecule type" value="Genomic_DNA"/>
</dbReference>
<dbReference type="PIR" id="T15486">
    <property type="entry name" value="T15486"/>
</dbReference>
<dbReference type="RefSeq" id="NP_509256.2">
    <property type="nucleotide sequence ID" value="NM_076855.5"/>
</dbReference>
<dbReference type="SMR" id="Q17895"/>
<dbReference type="FunCoup" id="Q17895">
    <property type="interactions" value="184"/>
</dbReference>
<dbReference type="IntAct" id="Q17895">
    <property type="interactions" value="7"/>
</dbReference>
<dbReference type="PaxDb" id="6239-C10A4.8"/>
<dbReference type="EnsemblMetazoa" id="C10A4.8.1">
    <property type="protein sequence ID" value="C10A4.8.1"/>
    <property type="gene ID" value="WBGene00003380"/>
</dbReference>
<dbReference type="GeneID" id="182489"/>
<dbReference type="KEGG" id="cel:CELE_C10A4.8"/>
<dbReference type="UCSC" id="C10A4.8">
    <property type="organism name" value="c. elegans"/>
</dbReference>
<dbReference type="AGR" id="WB:WBGene00003380"/>
<dbReference type="CTD" id="182489"/>
<dbReference type="WormBase" id="C10A4.8">
    <property type="protein sequence ID" value="CE35391"/>
    <property type="gene ID" value="WBGene00003380"/>
    <property type="gene designation" value="mnm-2"/>
</dbReference>
<dbReference type="eggNOG" id="KOG1721">
    <property type="taxonomic scope" value="Eukaryota"/>
</dbReference>
<dbReference type="HOGENOM" id="CLU_1116607_0_0_1"/>
<dbReference type="InParanoid" id="Q17895"/>
<dbReference type="OMA" id="MRTHTNL"/>
<dbReference type="OrthoDB" id="40579at2759"/>
<dbReference type="PhylomeDB" id="Q17895"/>
<dbReference type="SignaLink" id="Q17895"/>
<dbReference type="PRO" id="PR:Q17895"/>
<dbReference type="Proteomes" id="UP000001940">
    <property type="component" value="Chromosome X"/>
</dbReference>
<dbReference type="Bgee" id="WBGene00003380">
    <property type="expression patterns" value="Expressed in embryo and 3 other cell types or tissues"/>
</dbReference>
<dbReference type="GO" id="GO:0005634">
    <property type="term" value="C:nucleus"/>
    <property type="evidence" value="ECO:0000315"/>
    <property type="project" value="UniProtKB"/>
</dbReference>
<dbReference type="GO" id="GO:0003700">
    <property type="term" value="F:DNA-binding transcription factor activity"/>
    <property type="evidence" value="ECO:0000318"/>
    <property type="project" value="GO_Central"/>
</dbReference>
<dbReference type="GO" id="GO:0000978">
    <property type="term" value="F:RNA polymerase II cis-regulatory region sequence-specific DNA binding"/>
    <property type="evidence" value="ECO:0000318"/>
    <property type="project" value="GO_Central"/>
</dbReference>
<dbReference type="GO" id="GO:0008270">
    <property type="term" value="F:zinc ion binding"/>
    <property type="evidence" value="ECO:0007669"/>
    <property type="project" value="UniProtKB-KW"/>
</dbReference>
<dbReference type="GO" id="GO:0007399">
    <property type="term" value="P:nervous system development"/>
    <property type="evidence" value="ECO:0007669"/>
    <property type="project" value="UniProtKB-KW"/>
</dbReference>
<dbReference type="GO" id="GO:1902669">
    <property type="term" value="P:positive regulation of axon guidance"/>
    <property type="evidence" value="ECO:0000315"/>
    <property type="project" value="UniProtKB"/>
</dbReference>
<dbReference type="GO" id="GO:0006357">
    <property type="term" value="P:regulation of transcription by RNA polymerase II"/>
    <property type="evidence" value="ECO:0000318"/>
    <property type="project" value="GO_Central"/>
</dbReference>
<dbReference type="FunFam" id="3.30.160.60:FF:000634">
    <property type="entry name" value="Zinc finger X-chromosomal protein"/>
    <property type="match status" value="1"/>
</dbReference>
<dbReference type="FunFam" id="3.30.160.60:FF:001182">
    <property type="entry name" value="Zinc finger, C2H2 type"/>
    <property type="match status" value="2"/>
</dbReference>
<dbReference type="Gene3D" id="3.30.160.60">
    <property type="entry name" value="Classic Zinc Finger"/>
    <property type="match status" value="3"/>
</dbReference>
<dbReference type="InterPro" id="IPR036236">
    <property type="entry name" value="Znf_C2H2_sf"/>
</dbReference>
<dbReference type="InterPro" id="IPR013087">
    <property type="entry name" value="Znf_C2H2_type"/>
</dbReference>
<dbReference type="PANTHER" id="PTHR23235">
    <property type="entry name" value="KRUEPPEL-LIKE TRANSCRIPTION FACTOR"/>
    <property type="match status" value="1"/>
</dbReference>
<dbReference type="PANTHER" id="PTHR23235:SF120">
    <property type="entry name" value="KRUPPEL-LIKE FACTOR 15"/>
    <property type="match status" value="1"/>
</dbReference>
<dbReference type="Pfam" id="PF00096">
    <property type="entry name" value="zf-C2H2"/>
    <property type="match status" value="3"/>
</dbReference>
<dbReference type="SMART" id="SM00355">
    <property type="entry name" value="ZnF_C2H2"/>
    <property type="match status" value="3"/>
</dbReference>
<dbReference type="SUPFAM" id="SSF57667">
    <property type="entry name" value="beta-beta-alpha zinc fingers"/>
    <property type="match status" value="2"/>
</dbReference>
<dbReference type="PROSITE" id="PS00028">
    <property type="entry name" value="ZINC_FINGER_C2H2_1"/>
    <property type="match status" value="3"/>
</dbReference>
<dbReference type="PROSITE" id="PS50157">
    <property type="entry name" value="ZINC_FINGER_C2H2_2"/>
    <property type="match status" value="3"/>
</dbReference>
<reference evidence="5" key="1">
    <citation type="journal article" date="1998" name="Science">
        <title>Genome sequence of the nematode C. elegans: a platform for investigating biology.</title>
        <authorList>
            <consortium name="The C. elegans sequencing consortium"/>
        </authorList>
    </citation>
    <scope>NUCLEOTIDE SEQUENCE [LARGE SCALE GENOMIC DNA]</scope>
    <source>
        <strain evidence="5">Bristol N2</strain>
    </source>
</reference>
<reference evidence="4" key="2">
    <citation type="journal article" date="2007" name="Dev. Biol.">
        <title>The C. elegans M3 neuron guides the growth cone of its sister cell M2 via the Krueppel-like zinc finger protein MNM-2.</title>
        <authorList>
            <person name="Rauthan M."/>
            <person name="Moerck C."/>
            <person name="Pilon M."/>
        </authorList>
    </citation>
    <scope>FUNCTION</scope>
    <scope>SUBCELLULAR LOCATION</scope>
    <scope>TISSUE SPECIFICITY</scope>
    <scope>DISRUPTION PHENOTYPE</scope>
    <scope>MUTAGENESIS OF ASN-141</scope>
</reference>
<name>MNM2_CAEEL</name>
<proteinExistence type="evidence at protein level"/>
<organism evidence="5">
    <name type="scientific">Caenorhabditis elegans</name>
    <dbReference type="NCBI Taxonomy" id="6239"/>
    <lineage>
        <taxon>Eukaryota</taxon>
        <taxon>Metazoa</taxon>
        <taxon>Ecdysozoa</taxon>
        <taxon>Nematoda</taxon>
        <taxon>Chromadorea</taxon>
        <taxon>Rhabditida</taxon>
        <taxon>Rhabditina</taxon>
        <taxon>Rhabditomorpha</taxon>
        <taxon>Rhabditoidea</taxon>
        <taxon>Rhabditidae</taxon>
        <taxon>Peloderinae</taxon>
        <taxon>Caenorhabditis</taxon>
    </lineage>
</organism>
<accession>Q17895</accession>
<gene>
    <name evidence="6" type="primary">mnm-2</name>
    <name evidence="6" type="ORF">C10A4.8</name>
</gene>
<evidence type="ECO:0000255" key="1">
    <source>
        <dbReference type="PROSITE-ProRule" id="PRU00042"/>
    </source>
</evidence>
<evidence type="ECO:0000256" key="2">
    <source>
        <dbReference type="SAM" id="MobiDB-lite"/>
    </source>
</evidence>
<evidence type="ECO:0000269" key="3">
    <source>
    </source>
</evidence>
<evidence type="ECO:0000305" key="4"/>
<evidence type="ECO:0000312" key="5">
    <source>
        <dbReference type="Proteomes" id="UP000001940"/>
    </source>
</evidence>
<evidence type="ECO:0000312" key="6">
    <source>
        <dbReference type="WormBase" id="C10A4.8"/>
    </source>
</evidence>
<keyword id="KW-0479">Metal-binding</keyword>
<keyword id="KW-0524">Neurogenesis</keyword>
<keyword id="KW-0539">Nucleus</keyword>
<keyword id="KW-1185">Reference proteome</keyword>
<keyword id="KW-0677">Repeat</keyword>
<keyword id="KW-0862">Zinc</keyword>
<keyword id="KW-0863">Zinc-finger</keyword>
<protein>
    <recommendedName>
        <fullName evidence="4">Zinc finger protein mnm-2</fullName>
    </recommendedName>
</protein>
<comment type="function">
    <text evidence="3">Required in the M3 pharyngeal motor neuron to guide the growth cone of the sister M2 motor neuron during axon development.</text>
</comment>
<comment type="subcellular location">
    <subcellularLocation>
        <location evidence="3">Nucleus</location>
    </subcellularLocation>
</comment>
<comment type="tissue specificity">
    <text evidence="3">In larva and adult, expressed in the M3 pharyngeal motor neurons, extrapharyngeal neurons in the head, the PQR tail neurons, rectal cells, vulva cells, the spermetheca-uterine valve, body wall muscle cells and neurons of the ventral nerve cord. In the embryo, expressed in pharyngeal cells, extrapharyngeal head neurons and within the tail. Expressed in body wall muscle cells during late embryonic stages. Expressed in the mother cells of the M2 and M3 pharyngeal motor neurons precursor cells at the embryonic bean stage and subsequently in the M2 and M3 cells as they are born. Expression is sustained only in the two M3 cells up to at least the 5-day-old adult. In contrast, expression gradually declines in the M2 cells beginning from the time of their birth, and is completely undetectable by the time of hatching.</text>
</comment>
<comment type="disruption phenotype">
    <text evidence="3">RNAi-mediated knockdown results in defective formation of the distal end of the two M2 pharyngeal motor neurons.</text>
</comment>